<accession>Q15MZ2</accession>
<feature type="chain" id="PRO_1000001316" description="LexA repressor">
    <location>
        <begin position="1"/>
        <end position="207"/>
    </location>
</feature>
<feature type="DNA-binding region" description="H-T-H motif" evidence="1">
    <location>
        <begin position="28"/>
        <end position="48"/>
    </location>
</feature>
<feature type="active site" description="For autocatalytic cleavage activity" evidence="1">
    <location>
        <position position="124"/>
    </location>
</feature>
<feature type="active site" description="For autocatalytic cleavage activity" evidence="1">
    <location>
        <position position="161"/>
    </location>
</feature>
<feature type="site" description="Cleavage; by autolysis" evidence="1">
    <location>
        <begin position="89"/>
        <end position="90"/>
    </location>
</feature>
<organism>
    <name type="scientific">Pseudoalteromonas atlantica (strain T6c / ATCC BAA-1087)</name>
    <dbReference type="NCBI Taxonomy" id="3042615"/>
    <lineage>
        <taxon>Bacteria</taxon>
        <taxon>Pseudomonadati</taxon>
        <taxon>Pseudomonadota</taxon>
        <taxon>Gammaproteobacteria</taxon>
        <taxon>Alteromonadales</taxon>
        <taxon>Alteromonadaceae</taxon>
        <taxon>Paraglaciecola</taxon>
    </lineage>
</organism>
<sequence length="207" mass="22915">MRPLTPRQEEVLQLIKTTMLETGMPPTRAEIARHLGFKSANAAEEHLKALARKGAIEILPGTSRGIRLTEPLEDQLEDQGLPLIGRVAAGEPILAQEHVEMHYKVDPSLFKPSADFLLRVSGMSMKDIGILDGDLLAVHKTTDVHNGQVVVARVDEDVTVKRLERKGRQVVLHAENEDFQPIKVDLATQPFNIEGIAVGVIRNADWM</sequence>
<evidence type="ECO:0000255" key="1">
    <source>
        <dbReference type="HAMAP-Rule" id="MF_00015"/>
    </source>
</evidence>
<dbReference type="EC" id="3.4.21.88" evidence="1"/>
<dbReference type="EMBL" id="CP000388">
    <property type="protein sequence ID" value="ABG42746.1"/>
    <property type="molecule type" value="Genomic_DNA"/>
</dbReference>
<dbReference type="RefSeq" id="WP_011576932.1">
    <property type="nucleotide sequence ID" value="NC_008228.1"/>
</dbReference>
<dbReference type="SMR" id="Q15MZ2"/>
<dbReference type="STRING" id="342610.Patl_4247"/>
<dbReference type="MEROPS" id="S24.001"/>
<dbReference type="KEGG" id="pat:Patl_4247"/>
<dbReference type="eggNOG" id="COG1974">
    <property type="taxonomic scope" value="Bacteria"/>
</dbReference>
<dbReference type="HOGENOM" id="CLU_066192_45_3_6"/>
<dbReference type="OrthoDB" id="9802364at2"/>
<dbReference type="Proteomes" id="UP000001981">
    <property type="component" value="Chromosome"/>
</dbReference>
<dbReference type="GO" id="GO:0003677">
    <property type="term" value="F:DNA binding"/>
    <property type="evidence" value="ECO:0007669"/>
    <property type="project" value="UniProtKB-UniRule"/>
</dbReference>
<dbReference type="GO" id="GO:0004252">
    <property type="term" value="F:serine-type endopeptidase activity"/>
    <property type="evidence" value="ECO:0007669"/>
    <property type="project" value="UniProtKB-UniRule"/>
</dbReference>
<dbReference type="GO" id="GO:0006281">
    <property type="term" value="P:DNA repair"/>
    <property type="evidence" value="ECO:0007669"/>
    <property type="project" value="UniProtKB-UniRule"/>
</dbReference>
<dbReference type="GO" id="GO:0006260">
    <property type="term" value="P:DNA replication"/>
    <property type="evidence" value="ECO:0007669"/>
    <property type="project" value="UniProtKB-UniRule"/>
</dbReference>
<dbReference type="GO" id="GO:0045892">
    <property type="term" value="P:negative regulation of DNA-templated transcription"/>
    <property type="evidence" value="ECO:0007669"/>
    <property type="project" value="UniProtKB-UniRule"/>
</dbReference>
<dbReference type="GO" id="GO:0006508">
    <property type="term" value="P:proteolysis"/>
    <property type="evidence" value="ECO:0007669"/>
    <property type="project" value="InterPro"/>
</dbReference>
<dbReference type="GO" id="GO:0009432">
    <property type="term" value="P:SOS response"/>
    <property type="evidence" value="ECO:0007669"/>
    <property type="project" value="UniProtKB-UniRule"/>
</dbReference>
<dbReference type="CDD" id="cd06529">
    <property type="entry name" value="S24_LexA-like"/>
    <property type="match status" value="1"/>
</dbReference>
<dbReference type="FunFam" id="1.10.10.10:FF:000009">
    <property type="entry name" value="LexA repressor"/>
    <property type="match status" value="1"/>
</dbReference>
<dbReference type="FunFam" id="2.10.109.10:FF:000001">
    <property type="entry name" value="LexA repressor"/>
    <property type="match status" value="1"/>
</dbReference>
<dbReference type="Gene3D" id="2.10.109.10">
    <property type="entry name" value="Umud Fragment, subunit A"/>
    <property type="match status" value="1"/>
</dbReference>
<dbReference type="Gene3D" id="1.10.10.10">
    <property type="entry name" value="Winged helix-like DNA-binding domain superfamily/Winged helix DNA-binding domain"/>
    <property type="match status" value="1"/>
</dbReference>
<dbReference type="HAMAP" id="MF_00015">
    <property type="entry name" value="LexA"/>
    <property type="match status" value="1"/>
</dbReference>
<dbReference type="InterPro" id="IPR006200">
    <property type="entry name" value="LexA"/>
</dbReference>
<dbReference type="InterPro" id="IPR039418">
    <property type="entry name" value="LexA-like"/>
</dbReference>
<dbReference type="InterPro" id="IPR036286">
    <property type="entry name" value="LexA/Signal_pep-like_sf"/>
</dbReference>
<dbReference type="InterPro" id="IPR006199">
    <property type="entry name" value="LexA_DNA-bd_dom"/>
</dbReference>
<dbReference type="InterPro" id="IPR050077">
    <property type="entry name" value="LexA_repressor"/>
</dbReference>
<dbReference type="InterPro" id="IPR006197">
    <property type="entry name" value="Peptidase_S24_LexA"/>
</dbReference>
<dbReference type="InterPro" id="IPR015927">
    <property type="entry name" value="Peptidase_S24_S26A/B/C"/>
</dbReference>
<dbReference type="InterPro" id="IPR036388">
    <property type="entry name" value="WH-like_DNA-bd_sf"/>
</dbReference>
<dbReference type="InterPro" id="IPR036390">
    <property type="entry name" value="WH_DNA-bd_sf"/>
</dbReference>
<dbReference type="NCBIfam" id="TIGR00498">
    <property type="entry name" value="lexA"/>
    <property type="match status" value="1"/>
</dbReference>
<dbReference type="PANTHER" id="PTHR33516">
    <property type="entry name" value="LEXA REPRESSOR"/>
    <property type="match status" value="1"/>
</dbReference>
<dbReference type="PANTHER" id="PTHR33516:SF2">
    <property type="entry name" value="LEXA REPRESSOR-RELATED"/>
    <property type="match status" value="1"/>
</dbReference>
<dbReference type="Pfam" id="PF01726">
    <property type="entry name" value="LexA_DNA_bind"/>
    <property type="match status" value="1"/>
</dbReference>
<dbReference type="Pfam" id="PF00717">
    <property type="entry name" value="Peptidase_S24"/>
    <property type="match status" value="1"/>
</dbReference>
<dbReference type="PRINTS" id="PR00726">
    <property type="entry name" value="LEXASERPTASE"/>
</dbReference>
<dbReference type="SUPFAM" id="SSF51306">
    <property type="entry name" value="LexA/Signal peptidase"/>
    <property type="match status" value="1"/>
</dbReference>
<dbReference type="SUPFAM" id="SSF46785">
    <property type="entry name" value="Winged helix' DNA-binding domain"/>
    <property type="match status" value="1"/>
</dbReference>
<reference key="1">
    <citation type="submission" date="2006-06" db="EMBL/GenBank/DDBJ databases">
        <title>Complete sequence of Pseudoalteromonas atlantica T6c.</title>
        <authorList>
            <consortium name="US DOE Joint Genome Institute"/>
            <person name="Copeland A."/>
            <person name="Lucas S."/>
            <person name="Lapidus A."/>
            <person name="Barry K."/>
            <person name="Detter J.C."/>
            <person name="Glavina del Rio T."/>
            <person name="Hammon N."/>
            <person name="Israni S."/>
            <person name="Dalin E."/>
            <person name="Tice H."/>
            <person name="Pitluck S."/>
            <person name="Saunders E."/>
            <person name="Brettin T."/>
            <person name="Bruce D."/>
            <person name="Han C."/>
            <person name="Tapia R."/>
            <person name="Gilna P."/>
            <person name="Schmutz J."/>
            <person name="Larimer F."/>
            <person name="Land M."/>
            <person name="Hauser L."/>
            <person name="Kyrpides N."/>
            <person name="Kim E."/>
            <person name="Karls A.C."/>
            <person name="Bartlett D."/>
            <person name="Higgins B.P."/>
            <person name="Richardson P."/>
        </authorList>
    </citation>
    <scope>NUCLEOTIDE SEQUENCE [LARGE SCALE GENOMIC DNA]</scope>
    <source>
        <strain>T6c / ATCC BAA-1087</strain>
    </source>
</reference>
<comment type="function">
    <text evidence="1">Represses a number of genes involved in the response to DNA damage (SOS response), including recA and lexA. In the presence of single-stranded DNA, RecA interacts with LexA causing an autocatalytic cleavage which disrupts the DNA-binding part of LexA, leading to derepression of the SOS regulon and eventually DNA repair.</text>
</comment>
<comment type="catalytic activity">
    <reaction evidence="1">
        <text>Hydrolysis of Ala-|-Gly bond in repressor LexA.</text>
        <dbReference type="EC" id="3.4.21.88"/>
    </reaction>
</comment>
<comment type="subunit">
    <text evidence="1">Homodimer.</text>
</comment>
<comment type="similarity">
    <text evidence="1">Belongs to the peptidase S24 family.</text>
</comment>
<keyword id="KW-0068">Autocatalytic cleavage</keyword>
<keyword id="KW-0227">DNA damage</keyword>
<keyword id="KW-0234">DNA repair</keyword>
<keyword id="KW-0235">DNA replication</keyword>
<keyword id="KW-0238">DNA-binding</keyword>
<keyword id="KW-0378">Hydrolase</keyword>
<keyword id="KW-0678">Repressor</keyword>
<keyword id="KW-0742">SOS response</keyword>
<keyword id="KW-0804">Transcription</keyword>
<keyword id="KW-0805">Transcription regulation</keyword>
<gene>
    <name evidence="1" type="primary">lexA</name>
    <name type="ordered locus">Patl_4247</name>
</gene>
<protein>
    <recommendedName>
        <fullName evidence="1">LexA repressor</fullName>
        <ecNumber evidence="1">3.4.21.88</ecNumber>
    </recommendedName>
</protein>
<proteinExistence type="inferred from homology"/>
<name>LEXA_PSEA6</name>